<protein>
    <recommendedName>
        <fullName evidence="7">Rotatin</fullName>
    </recommendedName>
</protein>
<gene>
    <name evidence="8" type="primary">Rttn</name>
</gene>
<comment type="function">
    <text evidence="1">Involved in the genetic cascade that governs left-right specification. Required for correct asymmetric expression of NODAL, LEFTY and PITX2 (By similarity).</text>
</comment>
<comment type="subunit">
    <text evidence="2">Interacts with PPP1R35; this interaction allows the mutual recruitment to the centriole.</text>
</comment>
<comment type="subcellular location">
    <subcellularLocation>
        <location evidence="1">Cytoplasm</location>
        <location evidence="1">Cytoskeleton</location>
        <location evidence="1">Cilium basal body</location>
    </subcellularLocation>
    <text evidence="1">Colocalizes with the basal bodies at the primary cilium.</text>
</comment>
<comment type="alternative products">
    <event type="alternative splicing"/>
    <isoform>
        <id>Q8R4Y8-1</id>
        <name>1</name>
        <sequence type="displayed"/>
    </isoform>
    <isoform>
        <id>Q8R4Y8-2</id>
        <name>2</name>
        <sequence type="described" ref="VSP_029034 VSP_029035"/>
    </isoform>
    <isoform>
        <id>Q8R4Y8-3</id>
        <name>3</name>
        <sequence type="described" ref="VSP_029032 VSP_029038 VSP_029039"/>
    </isoform>
    <isoform>
        <id>Q8R4Y8-4</id>
        <name>4</name>
        <sequence type="described" ref="VSP_029033 VSP_029036 VSP_029037"/>
    </isoform>
</comment>
<comment type="developmental stage">
    <text evidence="4">Expressed at 7.5 dpc. At 8.5 dpc, expressed in telencephalon and somites. At 9.5 dpc, expressed in somites, forelimb bud, basal forebrain and first branchial arch. At 11.5 dpc, expressed in heart primordium and branchial arches.</text>
</comment>
<comment type="disruption phenotype">
    <text evidence="4 5">Death at 11.5 dpc due to major developmental defects, including notochord degeneration, imperfect differentiation of somites and neural tube, axial rotation failure and randomized heart looping.</text>
</comment>
<comment type="similarity">
    <text evidence="7">Belongs to the rotatin family.</text>
</comment>
<comment type="sequence caution" evidence="7">
    <conflict type="erroneous initiation">
        <sequence resource="EMBL-CDS" id="AAH23916"/>
    </conflict>
    <text>Truncated N-terminus.</text>
</comment>
<name>RTTN_MOUSE</name>
<proteinExistence type="evidence at protein level"/>
<accession>Q8R4Y8</accession>
<accession>A0PJL2</accession>
<accession>Q8BPW5</accession>
<accession>Q8C461</accession>
<accession>Q8CCK5</accession>
<accession>Q8CIG4</accession>
<reference key="1">
    <citation type="journal article" date="2005" name="Science">
        <title>The transcriptional landscape of the mammalian genome.</title>
        <authorList>
            <person name="Carninci P."/>
            <person name="Kasukawa T."/>
            <person name="Katayama S."/>
            <person name="Gough J."/>
            <person name="Frith M.C."/>
            <person name="Maeda N."/>
            <person name="Oyama R."/>
            <person name="Ravasi T."/>
            <person name="Lenhard B."/>
            <person name="Wells C."/>
            <person name="Kodzius R."/>
            <person name="Shimokawa K."/>
            <person name="Bajic V.B."/>
            <person name="Brenner S.E."/>
            <person name="Batalov S."/>
            <person name="Forrest A.R."/>
            <person name="Zavolan M."/>
            <person name="Davis M.J."/>
            <person name="Wilming L.G."/>
            <person name="Aidinis V."/>
            <person name="Allen J.E."/>
            <person name="Ambesi-Impiombato A."/>
            <person name="Apweiler R."/>
            <person name="Aturaliya R.N."/>
            <person name="Bailey T.L."/>
            <person name="Bansal M."/>
            <person name="Baxter L."/>
            <person name="Beisel K.W."/>
            <person name="Bersano T."/>
            <person name="Bono H."/>
            <person name="Chalk A.M."/>
            <person name="Chiu K.P."/>
            <person name="Choudhary V."/>
            <person name="Christoffels A."/>
            <person name="Clutterbuck D.R."/>
            <person name="Crowe M.L."/>
            <person name="Dalla E."/>
            <person name="Dalrymple B.P."/>
            <person name="de Bono B."/>
            <person name="Della Gatta G."/>
            <person name="di Bernardo D."/>
            <person name="Down T."/>
            <person name="Engstrom P."/>
            <person name="Fagiolini M."/>
            <person name="Faulkner G."/>
            <person name="Fletcher C.F."/>
            <person name="Fukushima T."/>
            <person name="Furuno M."/>
            <person name="Futaki S."/>
            <person name="Gariboldi M."/>
            <person name="Georgii-Hemming P."/>
            <person name="Gingeras T.R."/>
            <person name="Gojobori T."/>
            <person name="Green R.E."/>
            <person name="Gustincich S."/>
            <person name="Harbers M."/>
            <person name="Hayashi Y."/>
            <person name="Hensch T.K."/>
            <person name="Hirokawa N."/>
            <person name="Hill D."/>
            <person name="Huminiecki L."/>
            <person name="Iacono M."/>
            <person name="Ikeo K."/>
            <person name="Iwama A."/>
            <person name="Ishikawa T."/>
            <person name="Jakt M."/>
            <person name="Kanapin A."/>
            <person name="Katoh M."/>
            <person name="Kawasawa Y."/>
            <person name="Kelso J."/>
            <person name="Kitamura H."/>
            <person name="Kitano H."/>
            <person name="Kollias G."/>
            <person name="Krishnan S.P."/>
            <person name="Kruger A."/>
            <person name="Kummerfeld S.K."/>
            <person name="Kurochkin I.V."/>
            <person name="Lareau L.F."/>
            <person name="Lazarevic D."/>
            <person name="Lipovich L."/>
            <person name="Liu J."/>
            <person name="Liuni S."/>
            <person name="McWilliam S."/>
            <person name="Madan Babu M."/>
            <person name="Madera M."/>
            <person name="Marchionni L."/>
            <person name="Matsuda H."/>
            <person name="Matsuzawa S."/>
            <person name="Miki H."/>
            <person name="Mignone F."/>
            <person name="Miyake S."/>
            <person name="Morris K."/>
            <person name="Mottagui-Tabar S."/>
            <person name="Mulder N."/>
            <person name="Nakano N."/>
            <person name="Nakauchi H."/>
            <person name="Ng P."/>
            <person name="Nilsson R."/>
            <person name="Nishiguchi S."/>
            <person name="Nishikawa S."/>
            <person name="Nori F."/>
            <person name="Ohara O."/>
            <person name="Okazaki Y."/>
            <person name="Orlando V."/>
            <person name="Pang K.C."/>
            <person name="Pavan W.J."/>
            <person name="Pavesi G."/>
            <person name="Pesole G."/>
            <person name="Petrovsky N."/>
            <person name="Piazza S."/>
            <person name="Reed J."/>
            <person name="Reid J.F."/>
            <person name="Ring B.Z."/>
            <person name="Ringwald M."/>
            <person name="Rost B."/>
            <person name="Ruan Y."/>
            <person name="Salzberg S.L."/>
            <person name="Sandelin A."/>
            <person name="Schneider C."/>
            <person name="Schoenbach C."/>
            <person name="Sekiguchi K."/>
            <person name="Semple C.A."/>
            <person name="Seno S."/>
            <person name="Sessa L."/>
            <person name="Sheng Y."/>
            <person name="Shibata Y."/>
            <person name="Shimada H."/>
            <person name="Shimada K."/>
            <person name="Silva D."/>
            <person name="Sinclair B."/>
            <person name="Sperling S."/>
            <person name="Stupka E."/>
            <person name="Sugiura K."/>
            <person name="Sultana R."/>
            <person name="Takenaka Y."/>
            <person name="Taki K."/>
            <person name="Tammoja K."/>
            <person name="Tan S.L."/>
            <person name="Tang S."/>
            <person name="Taylor M.S."/>
            <person name="Tegner J."/>
            <person name="Teichmann S.A."/>
            <person name="Ueda H.R."/>
            <person name="van Nimwegen E."/>
            <person name="Verardo R."/>
            <person name="Wei C.L."/>
            <person name="Yagi K."/>
            <person name="Yamanishi H."/>
            <person name="Zabarovsky E."/>
            <person name="Zhu S."/>
            <person name="Zimmer A."/>
            <person name="Hide W."/>
            <person name="Bult C."/>
            <person name="Grimmond S.M."/>
            <person name="Teasdale R.D."/>
            <person name="Liu E.T."/>
            <person name="Brusic V."/>
            <person name="Quackenbush J."/>
            <person name="Wahlestedt C."/>
            <person name="Mattick J.S."/>
            <person name="Hume D.A."/>
            <person name="Kai C."/>
            <person name="Sasaki D."/>
            <person name="Tomaru Y."/>
            <person name="Fukuda S."/>
            <person name="Kanamori-Katayama M."/>
            <person name="Suzuki M."/>
            <person name="Aoki J."/>
            <person name="Arakawa T."/>
            <person name="Iida J."/>
            <person name="Imamura K."/>
            <person name="Itoh M."/>
            <person name="Kato T."/>
            <person name="Kawaji H."/>
            <person name="Kawagashira N."/>
            <person name="Kawashima T."/>
            <person name="Kojima M."/>
            <person name="Kondo S."/>
            <person name="Konno H."/>
            <person name="Nakano K."/>
            <person name="Ninomiya N."/>
            <person name="Nishio T."/>
            <person name="Okada M."/>
            <person name="Plessy C."/>
            <person name="Shibata K."/>
            <person name="Shiraki T."/>
            <person name="Suzuki S."/>
            <person name="Tagami M."/>
            <person name="Waki K."/>
            <person name="Watahiki A."/>
            <person name="Okamura-Oho Y."/>
            <person name="Suzuki H."/>
            <person name="Kawai J."/>
            <person name="Hayashizaki Y."/>
        </authorList>
    </citation>
    <scope>NUCLEOTIDE SEQUENCE [LARGE SCALE MRNA] (ISOFORMS 2; 3 AND 4)</scope>
    <source>
        <strain>C57BL/6J</strain>
        <tissue>Eye</tissue>
        <tissue>Olfactory bulb</tissue>
        <tissue>Spinal cord</tissue>
    </source>
</reference>
<reference key="2">
    <citation type="journal article" date="2002" name="Mech. Dev.">
        <title>Rotatin is a novel gene required for axial rotation and left-right specification in mouse embryos.</title>
        <authorList>
            <person name="Faisst A.M."/>
            <person name="Alvarez-Bolado G."/>
            <person name="Treichel D."/>
            <person name="Gruss P."/>
        </authorList>
    </citation>
    <scope>NUCLEOTIDE SEQUENCE [MRNA] OF 1-2034 (ISOFORM 1)</scope>
    <scope>DISRUPTION PHENOTYPE</scope>
    <scope>DEVELOPMENTAL STAGE</scope>
</reference>
<reference key="3">
    <citation type="journal article" date="2004" name="Genome Res.">
        <title>The status, quality, and expansion of the NIH full-length cDNA project: the Mammalian Gene Collection (MGC).</title>
        <authorList>
            <consortium name="The MGC Project Team"/>
        </authorList>
    </citation>
    <scope>NUCLEOTIDE SEQUENCE [LARGE SCALE MRNA] OF 1412-2226 (ISOFORM 1)</scope>
    <source>
        <strain>FVB/N</strain>
        <tissue>Mammary tumor</tissue>
    </source>
</reference>
<reference key="4">
    <citation type="journal article" date="2007" name="Mamm. Genome">
        <title>Nt mutation causing laterality defects associated with deletion of rotatin.</title>
        <authorList>
            <person name="Chatterjee B."/>
            <person name="Richards K."/>
            <person name="Bucan M."/>
            <person name="Lo C."/>
        </authorList>
    </citation>
    <scope>DISRUPTION PHENOTYPE</scope>
</reference>
<reference key="5">
    <citation type="journal article" date="2010" name="Cell">
        <title>A tissue-specific atlas of mouse protein phosphorylation and expression.</title>
        <authorList>
            <person name="Huttlin E.L."/>
            <person name="Jedrychowski M.P."/>
            <person name="Elias J.E."/>
            <person name="Goswami T."/>
            <person name="Rad R."/>
            <person name="Beausoleil S.A."/>
            <person name="Villen J."/>
            <person name="Haas W."/>
            <person name="Sowa M.E."/>
            <person name="Gygi S.P."/>
        </authorList>
    </citation>
    <scope>IDENTIFICATION BY MASS SPECTROMETRY [LARGE SCALE ANALYSIS]</scope>
    <source>
        <tissue>Spleen</tissue>
        <tissue>Testis</tissue>
    </source>
</reference>
<sequence>MVLAGLIRKLGHQLAEIRERALKSILCKIEHNLICYADLIQERLLFLHLLEWFNFPSVPMKEEVLNLLSRLVKYSPAVQHLIDLGAVEFLSKLRPNVEPVIQAEIDGILDGLFILPSEVPALCSSSYHTDQIELSQQPEVLTGYFPQDKSNFQQMEVPPGPAGNQAVKWLRFSVFPWLPLTTTDRHVLSSNESSLRSSNHTLIWNTCELLKDVIMQDFPAEIFLQRPKIVQGLLCLVKLAFGGDGKHRLALQSVSCLQQLCTSLRNRLNFYRDPNFFSSRQDTVSQNSSLSYCHEARGPYHSPNPSPGSSSSRPSVVGRTGQRPRGDGQDWDAVSSSGSSSHTHVNSRISVHSPLDVAPVDLPELEAEDTLELQFQQLSLPQFCISTLEAAAPLLRTGSREMIIRVLELLAEDMLLIGQAISSEIWDDNSLFAINVKEKLLQVLGSLGETMCYRKTSFSMEQAEAVLVHHRMAFVSISLFTVRLLQLLLPVEKASEFLPESMSAALFFVSLDMPISLEYPEIHDTVVAYLEQLDSENYSIYKRTAEAVYSIECTCNFLSDVGKEGEKNLLELVELADQALRSFSYHQHSPLIKEIICICSKIWKSAQASPLLQGESQKVFLHMLSHPLPQVKVETYQCCLEIVKECLGVQNVTKPVSSLCSGIHFLLHPKVLYEISAFGIQESKNEVNAAAKAILLYLLQGRLMMTALTWNKFIESLAPVIPVLQGYADTEDPLGNCILLLSKVSSEAGEGALPCTARLKSVLRLLLVKKPSVRSLALKLLAFHLTSEEGADKKRPFIDAGVLSRVTNLFIVKKPIDLKLDDRRELVIKLETVKKVCDIFTSDDVDLVLRKSAAEQLAVIMQDIKMHTVVKKLCLVEKIIGHLNEFVGQDGEVIECLIQPCLTLLRKVLYADPVIRVSLSQQASLLTLLLRVSLIFHEDCTVVAEVGALFCLLLFDEVSRMDTWSDTLSDKPSLSSVFSLPVSVFRRYHLPVHVTGHHAVSPYSIVLPLPTECLTLKPVSDMLRIAWNLAWYHGSDNLLKQMTSEAKIQEFLDTLQLSTEDILALKITYTDSGLKDCLQSIIQAGGHRDVRAAITRMSFYLLNDKLSLKDDIGPCGVTLKSLAWHTVLNRFLQVLPACTEDEKLLIDIIHFLNKLIKEQRKNPSIELLNWILELLLRHNPSPLLDLLVLTDSHAGEETDDVRTAVRQQLQKELISLLNSLLLVFMTVSDRKCLELFYVFQTQLSLKLLQCLRVTDAPHFYGLPSLERTLAGMAHLTAFPGWSAHSPLSKPLEICGKYLSGLLEVITSFYVERGGNAMSFMGKGVTKSTGLCLLHLSHEMIVQAPGSEWMPLWFLPLGSHSEEHAPTQQGLAWLIPLWVDRDPEVRFTSLGLGSALTTIEAGCVALANSCQNISGGLWGTVVNILLDQSECSLVRREAAFILQNLLVIPMPSEIIKDYTWQGPCVHDEDSGLSLSGKPALQALLYHCRFYEHLTHMVKHCYVGRYIFDFNFSAFTETSEYSDLNGLDDSFKFWRAPSGTSTQDHEPSSLSTSETMVAASVVSSEIQPLLPSTLLPETALDQFVTQGQREMRPVRPRDSLLSTSLNRQYVFVTPSLLSAVCSLLDNLLAVTPRDAANAFQQAHLIELLCSTVDASLIEMCIQELKTPLPLPSAVEHIQAQASFFLEYLSSLSQLLKSCLLVEPKLVTQDELLKPLITNVIRVLIVCPKDVLDVQLVLAFYRTWTHLFDLLATLLRKAGAVSLVPLTSALAKHWEAVTDTLCRCVGLSFKCPALTIASLQFLSVLLAEEEKRRVQDKDKTNEGQAPTVALLLDGTQGSLSSSERLNETILQCYEGISPKDVLKRVAANALLSLLAVSRRAQRHALRSDLIENCMEQMKHINAQLNLDLLRPGKAVLKKKEDGFIKELSITMQLLRNCLYQNEECKVAALEARLVPVLHSLWPWLLMEDSLMQIALQLLCVYTANFPAGCSSLCWSNYGQCIQTAHRGTPSSSLILCILKLASQMPAENTTIQQLVFMFLSNLALSHDCKGVIQKSNFLQHFLSLTLPKGGNQHLSTVAILWLKLLLNMSFGEDGQQMILRLDGCLDLLIEMSKYKHKSSPHMPLLIFHNICFSPANKPKILANEKVVTLLAACLESENQTAQRIGAASLWALTYNYQKAKATLKNPSIKRKVDEAYSIAKRTLSNSEENPLNSYYLKCLENLVQLLNYS</sequence>
<feature type="chain" id="PRO_0000308613" description="Rotatin">
    <location>
        <begin position="1"/>
        <end position="2226"/>
    </location>
</feature>
<feature type="region of interest" description="Disordered" evidence="3">
    <location>
        <begin position="295"/>
        <end position="346"/>
    </location>
</feature>
<feature type="compositionally biased region" description="Low complexity" evidence="3">
    <location>
        <begin position="307"/>
        <end position="319"/>
    </location>
</feature>
<feature type="modified residue" description="Phosphoserine" evidence="2">
    <location>
        <position position="311"/>
    </location>
</feature>
<feature type="modified residue" description="N6-acetyllysine" evidence="2">
    <location>
        <position position="813"/>
    </location>
</feature>
<feature type="splice variant" id="VSP_029032" description="In isoform 3." evidence="6">
    <location>
        <begin position="1"/>
        <end position="1494"/>
    </location>
</feature>
<feature type="splice variant" id="VSP_029033" description="In isoform 4." evidence="6">
    <location>
        <begin position="1"/>
        <end position="622"/>
    </location>
</feature>
<feature type="splice variant" id="VSP_029034" description="In isoform 2." evidence="6">
    <original>I</original>
    <variation>M</variation>
    <location>
        <position position="602"/>
    </location>
</feature>
<feature type="splice variant" id="VSP_029035" description="In isoform 2." evidence="6">
    <location>
        <begin position="603"/>
        <end position="2226"/>
    </location>
</feature>
<feature type="splice variant" id="VSP_029036" description="In isoform 4." evidence="6">
    <original>DIKMHTVVKKLCLVEKIIGHLNEFVGQDGEVIECLIQPCLTLLR</original>
    <variation>GNEDFVLFCSVLFCSVLFCSVLSCFVLFCFLTVIVAHLGFEIAV</variation>
    <location>
        <begin position="863"/>
        <end position="906"/>
    </location>
</feature>
<feature type="splice variant" id="VSP_029037" description="In isoform 4." evidence="6">
    <location>
        <begin position="907"/>
        <end position="2226"/>
    </location>
</feature>
<feature type="splice variant" id="VSP_029038" description="In isoform 3." evidence="6">
    <original>KEDGFI</original>
    <variation>KGGWLH</variation>
    <location>
        <begin position="1916"/>
        <end position="1921"/>
    </location>
</feature>
<feature type="splice variant" id="VSP_029039" description="In isoform 3." evidence="6">
    <location>
        <begin position="1922"/>
        <end position="2226"/>
    </location>
</feature>
<feature type="sequence conflict" description="In Ref. 3; AAH23916." evidence="7" ref="3">
    <original>V</original>
    <variation>M</variation>
    <location>
        <position position="1420"/>
    </location>
</feature>
<feature type="sequence conflict" description="In Ref. 2; AAM02906." evidence="7" ref="2">
    <original>M</original>
    <variation>I</variation>
    <location>
        <position position="2034"/>
    </location>
</feature>
<organism>
    <name type="scientific">Mus musculus</name>
    <name type="common">Mouse</name>
    <dbReference type="NCBI Taxonomy" id="10090"/>
    <lineage>
        <taxon>Eukaryota</taxon>
        <taxon>Metazoa</taxon>
        <taxon>Chordata</taxon>
        <taxon>Craniata</taxon>
        <taxon>Vertebrata</taxon>
        <taxon>Euteleostomi</taxon>
        <taxon>Mammalia</taxon>
        <taxon>Eutheria</taxon>
        <taxon>Euarchontoglires</taxon>
        <taxon>Glires</taxon>
        <taxon>Rodentia</taxon>
        <taxon>Myomorpha</taxon>
        <taxon>Muroidea</taxon>
        <taxon>Muridae</taxon>
        <taxon>Murinae</taxon>
        <taxon>Mus</taxon>
        <taxon>Mus</taxon>
    </lineage>
</organism>
<keyword id="KW-0007">Acetylation</keyword>
<keyword id="KW-0025">Alternative splicing</keyword>
<keyword id="KW-0966">Cell projection</keyword>
<keyword id="KW-0969">Cilium</keyword>
<keyword id="KW-0963">Cytoplasm</keyword>
<keyword id="KW-0206">Cytoskeleton</keyword>
<keyword id="KW-0217">Developmental protein</keyword>
<keyword id="KW-0597">Phosphoprotein</keyword>
<keyword id="KW-1185">Reference proteome</keyword>
<dbReference type="EMBL" id="AK032605">
    <property type="protein sequence ID" value="BAC27946.1"/>
    <property type="molecule type" value="mRNA"/>
</dbReference>
<dbReference type="EMBL" id="AK052059">
    <property type="protein sequence ID" value="BAC34842.1"/>
    <property type="molecule type" value="mRNA"/>
</dbReference>
<dbReference type="EMBL" id="AK083016">
    <property type="protein sequence ID" value="BAC38732.1"/>
    <property type="molecule type" value="mRNA"/>
</dbReference>
<dbReference type="EMBL" id="AF265232">
    <property type="protein sequence ID" value="AAM02906.1"/>
    <property type="molecule type" value="mRNA"/>
</dbReference>
<dbReference type="EMBL" id="BC023916">
    <property type="protein sequence ID" value="AAH23916.1"/>
    <property type="status" value="ALT_INIT"/>
    <property type="molecule type" value="mRNA"/>
</dbReference>
<dbReference type="EMBL" id="BC049935">
    <property type="protein sequence ID" value="AAH49935.1"/>
    <property type="molecule type" value="mRNA"/>
</dbReference>
<dbReference type="CCDS" id="CCDS29390.1">
    <molecule id="Q8R4Y8-1"/>
</dbReference>
<dbReference type="RefSeq" id="NP_780751.2">
    <molecule id="Q8R4Y8-1"/>
    <property type="nucleotide sequence ID" value="NM_175542.3"/>
</dbReference>
<dbReference type="SMR" id="Q8R4Y8"/>
<dbReference type="FunCoup" id="Q8R4Y8">
    <property type="interactions" value="1709"/>
</dbReference>
<dbReference type="STRING" id="10090.ENSMUSP00000023828"/>
<dbReference type="GlyGen" id="Q8R4Y8">
    <property type="glycosylation" value="4 sites, 3 N-linked glycans (3 sites)"/>
</dbReference>
<dbReference type="iPTMnet" id="Q8R4Y8"/>
<dbReference type="PhosphoSitePlus" id="Q8R4Y8"/>
<dbReference type="jPOST" id="Q8R4Y8"/>
<dbReference type="PaxDb" id="10090-ENSMUSP00000023828"/>
<dbReference type="PeptideAtlas" id="Q8R4Y8"/>
<dbReference type="ProteomicsDB" id="260868">
    <molecule id="Q8R4Y8-1"/>
</dbReference>
<dbReference type="ProteomicsDB" id="260869">
    <molecule id="Q8R4Y8-2"/>
</dbReference>
<dbReference type="ProteomicsDB" id="260870">
    <molecule id="Q8R4Y8-3"/>
</dbReference>
<dbReference type="ProteomicsDB" id="260871">
    <molecule id="Q8R4Y8-4"/>
</dbReference>
<dbReference type="Pumba" id="Q8R4Y8"/>
<dbReference type="Antibodypedia" id="49105">
    <property type="antibodies" value="26 antibodies from 9 providers"/>
</dbReference>
<dbReference type="DNASU" id="246102"/>
<dbReference type="Ensembl" id="ENSMUST00000023828.9">
    <molecule id="Q8R4Y8-1"/>
    <property type="protein sequence ID" value="ENSMUSP00000023828.8"/>
    <property type="gene ID" value="ENSMUSG00000023066.11"/>
</dbReference>
<dbReference type="GeneID" id="246102"/>
<dbReference type="KEGG" id="mmu:246102"/>
<dbReference type="UCSC" id="uc008fvi.1">
    <molecule id="Q8R4Y8-2"/>
    <property type="organism name" value="mouse"/>
</dbReference>
<dbReference type="UCSC" id="uc008fvj.1">
    <molecule id="Q8R4Y8-1"/>
    <property type="organism name" value="mouse"/>
</dbReference>
<dbReference type="UCSC" id="uc008fvk.1">
    <molecule id="Q8R4Y8-4"/>
    <property type="organism name" value="mouse"/>
</dbReference>
<dbReference type="UCSC" id="uc012bfr.1">
    <molecule id="Q8R4Y8-3"/>
    <property type="organism name" value="mouse"/>
</dbReference>
<dbReference type="AGR" id="MGI:2179288"/>
<dbReference type="CTD" id="25914"/>
<dbReference type="MGI" id="MGI:2179288">
    <property type="gene designation" value="Rttn"/>
</dbReference>
<dbReference type="VEuPathDB" id="HostDB:ENSMUSG00000023066"/>
<dbReference type="eggNOG" id="ENOG502QPM7">
    <property type="taxonomic scope" value="Eukaryota"/>
</dbReference>
<dbReference type="GeneTree" id="ENSGT00640000091535"/>
<dbReference type="HOGENOM" id="CLU_001318_0_0_1"/>
<dbReference type="InParanoid" id="Q8R4Y8"/>
<dbReference type="OMA" id="FCKCVGL"/>
<dbReference type="OrthoDB" id="428850at2759"/>
<dbReference type="PhylomeDB" id="Q8R4Y8"/>
<dbReference type="TreeFam" id="TF323508"/>
<dbReference type="BioGRID-ORCS" id="246102">
    <property type="hits" value="6 hits in 76 CRISPR screens"/>
</dbReference>
<dbReference type="ChiTaRS" id="Rttn">
    <property type="organism name" value="mouse"/>
</dbReference>
<dbReference type="PRO" id="PR:Q8R4Y8"/>
<dbReference type="Proteomes" id="UP000000589">
    <property type="component" value="Chromosome 18"/>
</dbReference>
<dbReference type="RNAct" id="Q8R4Y8">
    <property type="molecule type" value="protein"/>
</dbReference>
<dbReference type="Bgee" id="ENSMUSG00000023066">
    <property type="expression patterns" value="Expressed in animal zygote and 184 other cell types or tissues"/>
</dbReference>
<dbReference type="ExpressionAtlas" id="Q8R4Y8">
    <property type="expression patterns" value="baseline and differential"/>
</dbReference>
<dbReference type="GO" id="GO:0005814">
    <property type="term" value="C:centriole"/>
    <property type="evidence" value="ECO:0000250"/>
    <property type="project" value="UniProtKB"/>
</dbReference>
<dbReference type="GO" id="GO:0005813">
    <property type="term" value="C:centrosome"/>
    <property type="evidence" value="ECO:0000250"/>
    <property type="project" value="UniProtKB"/>
</dbReference>
<dbReference type="GO" id="GO:0036064">
    <property type="term" value="C:ciliary basal body"/>
    <property type="evidence" value="ECO:0000250"/>
    <property type="project" value="UniProtKB"/>
</dbReference>
<dbReference type="GO" id="GO:0005737">
    <property type="term" value="C:cytoplasm"/>
    <property type="evidence" value="ECO:0007669"/>
    <property type="project" value="UniProtKB-KW"/>
</dbReference>
<dbReference type="GO" id="GO:0016020">
    <property type="term" value="C:membrane"/>
    <property type="evidence" value="ECO:0000250"/>
    <property type="project" value="MGI"/>
</dbReference>
<dbReference type="GO" id="GO:0044782">
    <property type="term" value="P:cilium organization"/>
    <property type="evidence" value="ECO:0007669"/>
    <property type="project" value="InterPro"/>
</dbReference>
<dbReference type="GO" id="GO:0007368">
    <property type="term" value="P:determination of left/right symmetry"/>
    <property type="evidence" value="ECO:0000315"/>
    <property type="project" value="MGI"/>
</dbReference>
<dbReference type="FunFam" id="1.25.10.10:FF:000811">
    <property type="entry name" value="rotatin isoform X1"/>
    <property type="match status" value="1"/>
</dbReference>
<dbReference type="Gene3D" id="1.25.10.10">
    <property type="entry name" value="Leucine-rich Repeat Variant"/>
    <property type="match status" value="1"/>
</dbReference>
<dbReference type="InterPro" id="IPR011989">
    <property type="entry name" value="ARM-like"/>
</dbReference>
<dbReference type="InterPro" id="IPR016024">
    <property type="entry name" value="ARM-type_fold"/>
</dbReference>
<dbReference type="InterPro" id="IPR030791">
    <property type="entry name" value="Rotatin"/>
</dbReference>
<dbReference type="InterPro" id="IPR029249">
    <property type="entry name" value="Rotatin_N"/>
</dbReference>
<dbReference type="PANTHER" id="PTHR31691">
    <property type="entry name" value="ROTATIN"/>
    <property type="match status" value="1"/>
</dbReference>
<dbReference type="PANTHER" id="PTHR31691:SF1">
    <property type="entry name" value="ROTATIN"/>
    <property type="match status" value="1"/>
</dbReference>
<dbReference type="Pfam" id="PF14726">
    <property type="entry name" value="RTTN_N"/>
    <property type="match status" value="1"/>
</dbReference>
<dbReference type="SUPFAM" id="SSF48371">
    <property type="entry name" value="ARM repeat"/>
    <property type="match status" value="3"/>
</dbReference>
<evidence type="ECO:0000250" key="1"/>
<evidence type="ECO:0000250" key="2">
    <source>
        <dbReference type="UniProtKB" id="Q86VV8"/>
    </source>
</evidence>
<evidence type="ECO:0000256" key="3">
    <source>
        <dbReference type="SAM" id="MobiDB-lite"/>
    </source>
</evidence>
<evidence type="ECO:0000269" key="4">
    <source>
    </source>
</evidence>
<evidence type="ECO:0000269" key="5">
    <source>
    </source>
</evidence>
<evidence type="ECO:0000303" key="6">
    <source>
    </source>
</evidence>
<evidence type="ECO:0000305" key="7"/>
<evidence type="ECO:0000312" key="8">
    <source>
        <dbReference type="MGI" id="MGI:2179288"/>
    </source>
</evidence>